<dbReference type="EMBL" id="U83908">
    <property type="protein sequence ID" value="AAB42218.1"/>
    <property type="status" value="ALT_SEQ"/>
    <property type="molecule type" value="Genomic_DNA"/>
</dbReference>
<dbReference type="EMBL" id="U96628">
    <property type="protein sequence ID" value="AAB67706.1"/>
    <property type="molecule type" value="mRNA"/>
</dbReference>
<dbReference type="EMBL" id="AK315295">
    <property type="protein sequence ID" value="BAG37701.1"/>
    <property type="molecule type" value="mRNA"/>
</dbReference>
<dbReference type="EMBL" id="AK223623">
    <property type="protein sequence ID" value="BAD97343.1"/>
    <property type="molecule type" value="mRNA"/>
</dbReference>
<dbReference type="EMBL" id="AL158163">
    <property type="status" value="NOT_ANNOTATED_CDS"/>
    <property type="molecule type" value="Genomic_DNA"/>
</dbReference>
<dbReference type="EMBL" id="AL136368">
    <property type="status" value="NOT_ANNOTATED_CDS"/>
    <property type="molecule type" value="Genomic_DNA"/>
</dbReference>
<dbReference type="EMBL" id="BC015036">
    <property type="protein sequence ID" value="AAH15036.1"/>
    <property type="status" value="ALT_SEQ"/>
    <property type="molecule type" value="mRNA"/>
</dbReference>
<dbReference type="EMBL" id="BC026104">
    <property type="protein sequence ID" value="AAH26104.1"/>
    <property type="molecule type" value="mRNA"/>
</dbReference>
<dbReference type="EMBL" id="BC031049">
    <property type="protein sequence ID" value="AAH31049.1"/>
    <property type="molecule type" value="mRNA"/>
</dbReference>
<dbReference type="CCDS" id="CCDS44478.1">
    <molecule id="Q53EL6-2"/>
</dbReference>
<dbReference type="CCDS" id="CCDS7567.1">
    <molecule id="Q53EL6-1"/>
</dbReference>
<dbReference type="PIR" id="JC5193">
    <property type="entry name" value="JC5193"/>
</dbReference>
<dbReference type="RefSeq" id="NP_055271.2">
    <molecule id="Q53EL6-1"/>
    <property type="nucleotide sequence ID" value="NM_014456.4"/>
</dbReference>
<dbReference type="RefSeq" id="NP_663314.1">
    <molecule id="Q53EL6-2"/>
    <property type="nucleotide sequence ID" value="NM_145341.4"/>
</dbReference>
<dbReference type="PDB" id="2GGF">
    <property type="method" value="NMR"/>
    <property type="chains" value="A=327-450"/>
</dbReference>
<dbReference type="PDB" id="2KZT">
    <property type="method" value="NMR"/>
    <property type="chains" value="A=157-318"/>
</dbReference>
<dbReference type="PDB" id="2RG8">
    <property type="method" value="X-ray"/>
    <property type="resolution" value="1.80 A"/>
    <property type="chains" value="A/B=157-320"/>
</dbReference>
<dbReference type="PDB" id="2ZU6">
    <property type="method" value="X-ray"/>
    <property type="resolution" value="2.80 A"/>
    <property type="chains" value="B/E=163-469"/>
</dbReference>
<dbReference type="PDB" id="3EIJ">
    <property type="method" value="X-ray"/>
    <property type="resolution" value="2.80 A"/>
    <property type="chains" value="A/B=157-469"/>
</dbReference>
<dbReference type="PDB" id="8XXL">
    <property type="method" value="EM"/>
    <property type="resolution" value="2.90 A"/>
    <property type="chains" value="CD=1-469"/>
</dbReference>
<dbReference type="PDB" id="8XXM">
    <property type="method" value="EM"/>
    <property type="resolution" value="3.20 A"/>
    <property type="chains" value="CD=1-469"/>
</dbReference>
<dbReference type="PDB" id="8XXN">
    <property type="method" value="EM"/>
    <property type="resolution" value="3.60 A"/>
    <property type="chains" value="CD=1-469"/>
</dbReference>
<dbReference type="PDB" id="9BKD">
    <property type="method" value="EM"/>
    <property type="resolution" value="2.60 A"/>
    <property type="chains" value="U=1-469"/>
</dbReference>
<dbReference type="PDB" id="9BLN">
    <property type="method" value="EM"/>
    <property type="resolution" value="3.90 A"/>
    <property type="chains" value="p=1-469"/>
</dbReference>
<dbReference type="PDBsum" id="2GGF"/>
<dbReference type="PDBsum" id="2KZT"/>
<dbReference type="PDBsum" id="2RG8"/>
<dbReference type="PDBsum" id="2ZU6"/>
<dbReference type="PDBsum" id="3EIJ"/>
<dbReference type="PDBsum" id="8XXL"/>
<dbReference type="PDBsum" id="8XXM"/>
<dbReference type="PDBsum" id="8XXN"/>
<dbReference type="PDBsum" id="9BKD"/>
<dbReference type="PDBsum" id="9BLN"/>
<dbReference type="BMRB" id="Q53EL6"/>
<dbReference type="EMDB" id="EMD-38752"/>
<dbReference type="EMDB" id="EMD-38753"/>
<dbReference type="EMDB" id="EMD-38754"/>
<dbReference type="EMDB" id="EMD-44641"/>
<dbReference type="EMDB" id="EMD-44671"/>
<dbReference type="SMR" id="Q53EL6"/>
<dbReference type="BioGRID" id="118098">
    <property type="interactions" value="181"/>
</dbReference>
<dbReference type="CORUM" id="Q53EL6"/>
<dbReference type="DIP" id="DIP-29756N"/>
<dbReference type="ELM" id="Q53EL6"/>
<dbReference type="FunCoup" id="Q53EL6">
    <property type="interactions" value="4201"/>
</dbReference>
<dbReference type="IntAct" id="Q53EL6">
    <property type="interactions" value="62"/>
</dbReference>
<dbReference type="MINT" id="Q53EL6"/>
<dbReference type="STRING" id="9606.ENSP00000280154"/>
<dbReference type="BindingDB" id="Q53EL6"/>
<dbReference type="ChEMBL" id="CHEMBL1781868"/>
<dbReference type="DrugCentral" id="Q53EL6"/>
<dbReference type="CarbonylDB" id="Q53EL6"/>
<dbReference type="GlyGen" id="Q53EL6">
    <property type="glycosylation" value="2 sites, 1 O-linked glycan (1 site)"/>
</dbReference>
<dbReference type="iPTMnet" id="Q53EL6"/>
<dbReference type="MetOSite" id="Q53EL6"/>
<dbReference type="PhosphoSitePlus" id="Q53EL6"/>
<dbReference type="SwissPalm" id="Q53EL6"/>
<dbReference type="BioMuta" id="PDCD4"/>
<dbReference type="DMDM" id="317373317"/>
<dbReference type="jPOST" id="Q53EL6"/>
<dbReference type="MassIVE" id="Q53EL6"/>
<dbReference type="PaxDb" id="9606-ENSP00000280154"/>
<dbReference type="PeptideAtlas" id="Q53EL6"/>
<dbReference type="ProteomicsDB" id="6218"/>
<dbReference type="ProteomicsDB" id="62437">
    <molecule id="Q53EL6-1"/>
</dbReference>
<dbReference type="Pumba" id="Q53EL6"/>
<dbReference type="Antibodypedia" id="616">
    <property type="antibodies" value="842 antibodies from 42 providers"/>
</dbReference>
<dbReference type="DNASU" id="27250"/>
<dbReference type="Ensembl" id="ENST00000280154.12">
    <molecule id="Q53EL6-1"/>
    <property type="protein sequence ID" value="ENSP00000280154.7"/>
    <property type="gene ID" value="ENSG00000150593.18"/>
</dbReference>
<dbReference type="Ensembl" id="ENST00000393104.6">
    <molecule id="Q53EL6-2"/>
    <property type="protein sequence ID" value="ENSP00000376816.2"/>
    <property type="gene ID" value="ENSG00000150593.18"/>
</dbReference>
<dbReference type="GeneID" id="27250"/>
<dbReference type="KEGG" id="hsa:27250"/>
<dbReference type="MANE-Select" id="ENST00000280154.12">
    <property type="protein sequence ID" value="ENSP00000280154.7"/>
    <property type="RefSeq nucleotide sequence ID" value="NM_014456.5"/>
    <property type="RefSeq protein sequence ID" value="NP_055271.2"/>
</dbReference>
<dbReference type="UCSC" id="uc001kzg.4">
    <molecule id="Q53EL6-1"/>
    <property type="organism name" value="human"/>
</dbReference>
<dbReference type="AGR" id="HGNC:8763"/>
<dbReference type="CTD" id="27250"/>
<dbReference type="DisGeNET" id="27250"/>
<dbReference type="GeneCards" id="PDCD4"/>
<dbReference type="HGNC" id="HGNC:8763">
    <property type="gene designation" value="PDCD4"/>
</dbReference>
<dbReference type="HPA" id="ENSG00000150593">
    <property type="expression patterns" value="Tissue enhanced (pancreas)"/>
</dbReference>
<dbReference type="MIM" id="608610">
    <property type="type" value="gene"/>
</dbReference>
<dbReference type="neXtProt" id="NX_Q53EL6"/>
<dbReference type="OpenTargets" id="ENSG00000150593"/>
<dbReference type="PharmGKB" id="PA33113"/>
<dbReference type="VEuPathDB" id="HostDB:ENSG00000150593"/>
<dbReference type="eggNOG" id="KOG0403">
    <property type="taxonomic scope" value="Eukaryota"/>
</dbReference>
<dbReference type="GeneTree" id="ENSGT00390000015948"/>
<dbReference type="HOGENOM" id="CLU_025354_1_0_1"/>
<dbReference type="InParanoid" id="Q53EL6"/>
<dbReference type="OMA" id="TRTHPQY"/>
<dbReference type="OrthoDB" id="414546at2759"/>
<dbReference type="PAN-GO" id="Q53EL6">
    <property type="GO annotations" value="2 GO annotations based on evolutionary models"/>
</dbReference>
<dbReference type="PhylomeDB" id="Q53EL6"/>
<dbReference type="TreeFam" id="TF323207"/>
<dbReference type="PathwayCommons" id="Q53EL6"/>
<dbReference type="Reactome" id="R-HSA-8950505">
    <property type="pathway name" value="Gene and protein expression by JAK-STAT signaling after Interleukin-12 stimulation"/>
</dbReference>
<dbReference type="SignaLink" id="Q53EL6"/>
<dbReference type="SIGNOR" id="Q53EL6"/>
<dbReference type="BioGRID-ORCS" id="27250">
    <property type="hits" value="11 hits in 1162 CRISPR screens"/>
</dbReference>
<dbReference type="ChiTaRS" id="PDCD4">
    <property type="organism name" value="human"/>
</dbReference>
<dbReference type="EvolutionaryTrace" id="Q53EL6"/>
<dbReference type="GeneWiki" id="PDCD4"/>
<dbReference type="GenomeRNAi" id="27250"/>
<dbReference type="Pharos" id="Q53EL6">
    <property type="development level" value="Tchem"/>
</dbReference>
<dbReference type="PRO" id="PR:Q53EL6"/>
<dbReference type="Proteomes" id="UP000005640">
    <property type="component" value="Chromosome 10"/>
</dbReference>
<dbReference type="RNAct" id="Q53EL6">
    <property type="molecule type" value="protein"/>
</dbReference>
<dbReference type="Bgee" id="ENSG00000150593">
    <property type="expression patterns" value="Expressed in body of pancreas and 207 other cell types or tissues"/>
</dbReference>
<dbReference type="ExpressionAtlas" id="Q53EL6">
    <property type="expression patterns" value="baseline and differential"/>
</dbReference>
<dbReference type="GO" id="GO:0005737">
    <property type="term" value="C:cytoplasm"/>
    <property type="evidence" value="ECO:0000315"/>
    <property type="project" value="UniProtKB"/>
</dbReference>
<dbReference type="GO" id="GO:0005829">
    <property type="term" value="C:cytosol"/>
    <property type="evidence" value="ECO:0000314"/>
    <property type="project" value="UniProtKB"/>
</dbReference>
<dbReference type="GO" id="GO:0005634">
    <property type="term" value="C:nucleus"/>
    <property type="evidence" value="ECO:0000315"/>
    <property type="project" value="UniProtKB"/>
</dbReference>
<dbReference type="GO" id="GO:0003723">
    <property type="term" value="F:RNA binding"/>
    <property type="evidence" value="ECO:0007669"/>
    <property type="project" value="UniProtKB-KW"/>
</dbReference>
<dbReference type="GO" id="GO:0006915">
    <property type="term" value="P:apoptotic process"/>
    <property type="evidence" value="ECO:0000304"/>
    <property type="project" value="ProtInc"/>
</dbReference>
<dbReference type="GO" id="GO:0030509">
    <property type="term" value="P:BMP signaling pathway"/>
    <property type="evidence" value="ECO:0000314"/>
    <property type="project" value="BHF-UCL"/>
</dbReference>
<dbReference type="GO" id="GO:0071222">
    <property type="term" value="P:cellular response to lipopolysaccharide"/>
    <property type="evidence" value="ECO:0000250"/>
    <property type="project" value="BHF-UCL"/>
</dbReference>
<dbReference type="GO" id="GO:0060940">
    <property type="term" value="P:epithelial to mesenchymal transition involved in cardiac fibroblast development"/>
    <property type="evidence" value="ECO:0000250"/>
    <property type="project" value="BHF-UCL"/>
</dbReference>
<dbReference type="GO" id="GO:1900016">
    <property type="term" value="P:negative regulation of cytokine production involved in inflammatory response"/>
    <property type="evidence" value="ECO:0000250"/>
    <property type="project" value="BHF-UCL"/>
</dbReference>
<dbReference type="GO" id="GO:0045892">
    <property type="term" value="P:negative regulation of DNA-templated transcription"/>
    <property type="evidence" value="ECO:0000314"/>
    <property type="project" value="UniProtKB"/>
</dbReference>
<dbReference type="GO" id="GO:0043508">
    <property type="term" value="P:negative regulation of JUN kinase activity"/>
    <property type="evidence" value="ECO:0000250"/>
    <property type="project" value="UniProtKB"/>
</dbReference>
<dbReference type="GO" id="GO:1904761">
    <property type="term" value="P:negative regulation of myofibroblast differentiation"/>
    <property type="evidence" value="ECO:0000315"/>
    <property type="project" value="BHF-UCL"/>
</dbReference>
<dbReference type="GO" id="GO:1905064">
    <property type="term" value="P:negative regulation of vascular associated smooth muscle cell differentiation"/>
    <property type="evidence" value="ECO:0000314"/>
    <property type="project" value="BHF-UCL"/>
</dbReference>
<dbReference type="GO" id="GO:1904706">
    <property type="term" value="P:negative regulation of vascular associated smooth muscle cell proliferation"/>
    <property type="evidence" value="ECO:0000315"/>
    <property type="project" value="BHF-UCL"/>
</dbReference>
<dbReference type="GO" id="GO:2000353">
    <property type="term" value="P:positive regulation of endothelial cell apoptotic process"/>
    <property type="evidence" value="ECO:0000315"/>
    <property type="project" value="BHF-UCL"/>
</dbReference>
<dbReference type="GO" id="GO:0050729">
    <property type="term" value="P:positive regulation of inflammatory response"/>
    <property type="evidence" value="ECO:0000250"/>
    <property type="project" value="BHF-UCL"/>
</dbReference>
<dbReference type="GO" id="GO:1901224">
    <property type="term" value="P:positive regulation of non-canonical NF-kappaB signal transduction"/>
    <property type="evidence" value="ECO:0000315"/>
    <property type="project" value="BHF-UCL"/>
</dbReference>
<dbReference type="GO" id="GO:1905461">
    <property type="term" value="P:positive regulation of vascular associated smooth muscle cell apoptotic process"/>
    <property type="evidence" value="ECO:0000315"/>
    <property type="project" value="BHF-UCL"/>
</dbReference>
<dbReference type="FunFam" id="1.25.40.180:FF:000008">
    <property type="entry name" value="Programmed cell death protein 4"/>
    <property type="match status" value="1"/>
</dbReference>
<dbReference type="FunFam" id="1.25.40.180:FF:000009">
    <property type="entry name" value="programmed cell death protein 4"/>
    <property type="match status" value="1"/>
</dbReference>
<dbReference type="Gene3D" id="1.25.40.180">
    <property type="match status" value="2"/>
</dbReference>
<dbReference type="IDEAL" id="IID00729"/>
<dbReference type="InterPro" id="IPR016024">
    <property type="entry name" value="ARM-type_fold"/>
</dbReference>
<dbReference type="InterPro" id="IPR003891">
    <property type="entry name" value="Initiation_fac_eIF4g_MI"/>
</dbReference>
<dbReference type="InterPro" id="IPR039778">
    <property type="entry name" value="PDCD4"/>
</dbReference>
<dbReference type="PANTHER" id="PTHR12626">
    <property type="entry name" value="PROGRAMMED CELL DEATH 4"/>
    <property type="match status" value="1"/>
</dbReference>
<dbReference type="PANTHER" id="PTHR12626:SF3">
    <property type="entry name" value="PROGRAMMED CELL DEATH PROTEIN 4"/>
    <property type="match status" value="1"/>
</dbReference>
<dbReference type="Pfam" id="PF02847">
    <property type="entry name" value="MA3"/>
    <property type="match status" value="2"/>
</dbReference>
<dbReference type="SMART" id="SM00544">
    <property type="entry name" value="MA3"/>
    <property type="match status" value="2"/>
</dbReference>
<dbReference type="SUPFAM" id="SSF48371">
    <property type="entry name" value="ARM repeat"/>
    <property type="match status" value="2"/>
</dbReference>
<dbReference type="PROSITE" id="PS51366">
    <property type="entry name" value="MI"/>
    <property type="match status" value="2"/>
</dbReference>
<organism>
    <name type="scientific">Homo sapiens</name>
    <name type="common">Human</name>
    <dbReference type="NCBI Taxonomy" id="9606"/>
    <lineage>
        <taxon>Eukaryota</taxon>
        <taxon>Metazoa</taxon>
        <taxon>Chordata</taxon>
        <taxon>Craniata</taxon>
        <taxon>Vertebrata</taxon>
        <taxon>Euteleostomi</taxon>
        <taxon>Mammalia</taxon>
        <taxon>Eutheria</taxon>
        <taxon>Euarchontoglires</taxon>
        <taxon>Primates</taxon>
        <taxon>Haplorrhini</taxon>
        <taxon>Catarrhini</taxon>
        <taxon>Hominidae</taxon>
        <taxon>Homo</taxon>
    </lineage>
</organism>
<accession>Q53EL6</accession>
<accession>B2RCV4</accession>
<accession>B5ME91</accession>
<accession>O15501</accession>
<accession>Q5VZS6</accession>
<accession>Q6PJI5</accession>
<accession>Q8TAR5</accession>
<accession>Q99834</accession>
<comment type="function">
    <text evidence="1 11 12 14 15 16 17">Inhibits translation initiation and cap-dependent translation. May excert its function by hindering the interaction between EIF4A1 and EIF4G. Inhibits the helicase activity of EIF4A. Modulates the activation of JUN kinase. Down-regulates the expression of MAP4K1, thus inhibiting events important in driving invasion, namely, MAPK85 activation and consequent JUN-dependent transcription. May play a role in apoptosis. Tumor suppressor. Inhibits tumor promoter-induced neoplastic transformation. Binds RNA (By similarity).</text>
</comment>
<comment type="subunit">
    <text evidence="1 14 15 16 17">Interacts (via MI domains) with EIF4A2 (By similarity). Interacts (via MI domains) with EIF4A1 (via N-terminal domain). Heterotrimer with EIF4A1; one molecule of PDCD4 binds two molecules of EIF4A1. Interacts with EIF4G1. May form a complex with EIF4A1 and EIF4G1. The interaction between PDCD4 and EIF4A1 interferes with the interaction between EIF4A1 and EIF4G. When phosphorylated, interacts with BTRC and FBXW11.</text>
</comment>
<comment type="interaction">
    <interactant intactId="EBI-935824">
        <id>Q53EL6</id>
    </interactant>
    <interactant intactId="EBI-1222467">
        <id>P02649</id>
        <label>APOE</label>
    </interactant>
    <organismsDiffer>false</organismsDiffer>
    <experiments>3</experiments>
</comment>
<comment type="interaction">
    <interactant intactId="EBI-935824">
        <id>Q53EL6</id>
    </interactant>
    <interactant intactId="EBI-73449">
        <id>P60842</id>
        <label>EIF4A1</label>
    </interactant>
    <organismsDiffer>false</organismsDiffer>
    <experiments>10</experiments>
</comment>
<comment type="interaction">
    <interactant intactId="EBI-935824">
        <id>Q53EL6</id>
    </interactant>
    <interactant intactId="EBI-73473">
        <id>Q14240</id>
        <label>EIF4A2</label>
    </interactant>
    <organismsDiffer>false</organismsDiffer>
    <experiments>5</experiments>
</comment>
<comment type="interaction">
    <interactant intactId="EBI-935824">
        <id>Q53EL6</id>
    </interactant>
    <interactant intactId="EBI-10232522">
        <id>Q14240-2</id>
        <label>EIF4A2</label>
    </interactant>
    <organismsDiffer>false</organismsDiffer>
    <experiments>3</experiments>
</comment>
<comment type="interaction">
    <interactant intactId="EBI-935824">
        <id>Q53EL6</id>
    </interactant>
    <interactant intactId="EBI-299104">
        <id>P38919</id>
        <label>EIF4A3</label>
    </interactant>
    <organismsDiffer>false</organismsDiffer>
    <experiments>6</experiments>
</comment>
<comment type="interaction">
    <interactant intactId="EBI-935824">
        <id>Q53EL6</id>
    </interactant>
    <interactant intactId="EBI-2010251">
        <id>P49810</id>
        <label>PSEN2</label>
    </interactant>
    <organismsDiffer>false</organismsDiffer>
    <experiments>3</experiments>
</comment>
<comment type="interaction">
    <interactant intactId="EBI-935824">
        <id>Q53EL6</id>
    </interactant>
    <interactant intactId="EBI-73886">
        <id>Q04206</id>
        <label>RELA</label>
    </interactant>
    <organismsDiffer>false</organismsDiffer>
    <experiments>6</experiments>
</comment>
<comment type="interaction">
    <interactant intactId="EBI-935824">
        <id>Q53EL6</id>
    </interactant>
    <interactant intactId="EBI-351850">
        <id>P62277</id>
        <label>RPS13</label>
    </interactant>
    <organismsDiffer>false</organismsDiffer>
    <experiments>2</experiments>
</comment>
<comment type="subcellular location">
    <subcellularLocation>
        <location evidence="2">Nucleus</location>
    </subcellularLocation>
    <subcellularLocation>
        <location evidence="2">Cytoplasm</location>
    </subcellularLocation>
    <text evidence="11">Shuttles between the nucleus and cytoplasm (By similarity). Predominantly nuclear under normal growth conditions, and when phosphorylated at Ser-457 (PubMed:16357133).</text>
</comment>
<comment type="alternative products">
    <event type="alternative splicing"/>
    <isoform>
        <id>Q53EL6-1</id>
        <name>1</name>
        <sequence type="displayed"/>
    </isoform>
    <isoform>
        <id>Q53EL6-2</id>
        <name>2</name>
        <sequence type="described" ref="VSP_045622"/>
    </isoform>
</comment>
<comment type="tissue specificity">
    <text evidence="7 8 12">Up-regulated in proliferative cells. Highly expressed in epithelial cells of the mammary gland. Reduced expression in lung cancer and colon carcinoma.</text>
</comment>
<comment type="induction">
    <text evidence="18">IL2/interleukin-2 stimulation inhibits expression, while IL12/interleukin-12 increases expression.</text>
</comment>
<comment type="domain">
    <text evidence="15 17">Binds EIF4A1 via both MI domains.</text>
</comment>
<comment type="PTM">
    <text evidence="14">Polyubiquitinated, leading to its proteasomal degradation. Rapidly degraded in response to mitogens. Phosphorylation of the phosphodegron promotes interaction with BTRC and proteasomal degradation.</text>
</comment>
<comment type="PTM">
    <text evidence="11 14">Phosphorylated at Ser-67 by RPS6KB1 in response to mitogens; phosphorylation promotes proteasomal degradation of PDCD4.</text>
</comment>
<comment type="similarity">
    <text evidence="22">Belongs to the PDCD4 family.</text>
</comment>
<comment type="sequence caution" evidence="22">
    <conflict type="erroneous gene model prediction">
        <sequence resource="EMBL-CDS" id="AAB42218"/>
    </conflict>
</comment>
<comment type="sequence caution" evidence="22">
    <conflict type="miscellaneous discrepancy">
        <sequence resource="EMBL-CDS" id="AAH15036"/>
    </conflict>
    <text>Contaminating sequence. Potential poly-A sequence.</text>
</comment>
<comment type="online information" name="Atlas of Genetics and Cytogenetics in Oncology and Haematology">
    <link uri="https://atlasgeneticsoncology.org/gene/41675/PDCD4"/>
</comment>
<name>PDCD4_HUMAN</name>
<reference key="1">
    <citation type="journal article" date="1997" name="Res. Commun. Biochem. Cell Mol. Biol.">
        <title>Isolation of a novel gene from a human cell line with Pr-28 MAb which recognizes a nuclear antigen involved in the cell cycle.</title>
        <authorList>
            <person name="Matsuhashi S."/>
            <person name="Yoshinaga H."/>
            <person name="Yatsuki H."/>
            <person name="Tsugita A."/>
            <person name="Hori K."/>
        </authorList>
    </citation>
    <scope>NUCLEOTIDE SEQUENCE [GENOMIC DNA]</scope>
    <scope>VARIANT VAL-36</scope>
    <source>
        <tissue>Glial tumor</tissue>
    </source>
</reference>
<reference key="2">
    <citation type="journal article" date="1998" name="J. Immunol.">
        <title>Differential transcriptional regulation of CD161 and a novel gene, 197/15a, by IL-2, IL-15, and IL-12 in NK and T cells.</title>
        <authorList>
            <person name="Azzoni L."/>
            <person name="Zatsepina O."/>
            <person name="Abebe B."/>
            <person name="Bennett I.M."/>
            <person name="Kanakaraj P."/>
            <person name="Perussia B."/>
        </authorList>
    </citation>
    <scope>NUCLEOTIDE SEQUENCE [MRNA] (ISOFORM 1)</scope>
    <scope>INDUCTION</scope>
    <scope>VARIANT VAL-36</scope>
    <source>
        <tissue>Blood</tissue>
    </source>
</reference>
<reference key="3">
    <citation type="journal article" date="2004" name="Nat. Genet.">
        <title>Complete sequencing and characterization of 21,243 full-length human cDNAs.</title>
        <authorList>
            <person name="Ota T."/>
            <person name="Suzuki Y."/>
            <person name="Nishikawa T."/>
            <person name="Otsuki T."/>
            <person name="Sugiyama T."/>
            <person name="Irie R."/>
            <person name="Wakamatsu A."/>
            <person name="Hayashi K."/>
            <person name="Sato H."/>
            <person name="Nagai K."/>
            <person name="Kimura K."/>
            <person name="Makita H."/>
            <person name="Sekine M."/>
            <person name="Obayashi M."/>
            <person name="Nishi T."/>
            <person name="Shibahara T."/>
            <person name="Tanaka T."/>
            <person name="Ishii S."/>
            <person name="Yamamoto J."/>
            <person name="Saito K."/>
            <person name="Kawai Y."/>
            <person name="Isono Y."/>
            <person name="Nakamura Y."/>
            <person name="Nagahari K."/>
            <person name="Murakami K."/>
            <person name="Yasuda T."/>
            <person name="Iwayanagi T."/>
            <person name="Wagatsuma M."/>
            <person name="Shiratori A."/>
            <person name="Sudo H."/>
            <person name="Hosoiri T."/>
            <person name="Kaku Y."/>
            <person name="Kodaira H."/>
            <person name="Kondo H."/>
            <person name="Sugawara M."/>
            <person name="Takahashi M."/>
            <person name="Kanda K."/>
            <person name="Yokoi T."/>
            <person name="Furuya T."/>
            <person name="Kikkawa E."/>
            <person name="Omura Y."/>
            <person name="Abe K."/>
            <person name="Kamihara K."/>
            <person name="Katsuta N."/>
            <person name="Sato K."/>
            <person name="Tanikawa M."/>
            <person name="Yamazaki M."/>
            <person name="Ninomiya K."/>
            <person name="Ishibashi T."/>
            <person name="Yamashita H."/>
            <person name="Murakawa K."/>
            <person name="Fujimori K."/>
            <person name="Tanai H."/>
            <person name="Kimata M."/>
            <person name="Watanabe M."/>
            <person name="Hiraoka S."/>
            <person name="Chiba Y."/>
            <person name="Ishida S."/>
            <person name="Ono Y."/>
            <person name="Takiguchi S."/>
            <person name="Watanabe S."/>
            <person name="Yosida M."/>
            <person name="Hotuta T."/>
            <person name="Kusano J."/>
            <person name="Kanehori K."/>
            <person name="Takahashi-Fujii A."/>
            <person name="Hara H."/>
            <person name="Tanase T.-O."/>
            <person name="Nomura Y."/>
            <person name="Togiya S."/>
            <person name="Komai F."/>
            <person name="Hara R."/>
            <person name="Takeuchi K."/>
            <person name="Arita M."/>
            <person name="Imose N."/>
            <person name="Musashino K."/>
            <person name="Yuuki H."/>
            <person name="Oshima A."/>
            <person name="Sasaki N."/>
            <person name="Aotsuka S."/>
            <person name="Yoshikawa Y."/>
            <person name="Matsunawa H."/>
            <person name="Ichihara T."/>
            <person name="Shiohata N."/>
            <person name="Sano S."/>
            <person name="Moriya S."/>
            <person name="Momiyama H."/>
            <person name="Satoh N."/>
            <person name="Takami S."/>
            <person name="Terashima Y."/>
            <person name="Suzuki O."/>
            <person name="Nakagawa S."/>
            <person name="Senoh A."/>
            <person name="Mizoguchi H."/>
            <person name="Goto Y."/>
            <person name="Shimizu F."/>
            <person name="Wakebe H."/>
            <person name="Hishigaki H."/>
            <person name="Watanabe T."/>
            <person name="Sugiyama A."/>
            <person name="Takemoto M."/>
            <person name="Kawakami B."/>
            <person name="Yamazaki M."/>
            <person name="Watanabe K."/>
            <person name="Kumagai A."/>
            <person name="Itakura S."/>
            <person name="Fukuzumi Y."/>
            <person name="Fujimori Y."/>
            <person name="Komiyama M."/>
            <person name="Tashiro H."/>
            <person name="Tanigami A."/>
            <person name="Fujiwara T."/>
            <person name="Ono T."/>
            <person name="Yamada K."/>
            <person name="Fujii Y."/>
            <person name="Ozaki K."/>
            <person name="Hirao M."/>
            <person name="Ohmori Y."/>
            <person name="Kawabata A."/>
            <person name="Hikiji T."/>
            <person name="Kobatake N."/>
            <person name="Inagaki H."/>
            <person name="Ikema Y."/>
            <person name="Okamoto S."/>
            <person name="Okitani R."/>
            <person name="Kawakami T."/>
            <person name="Noguchi S."/>
            <person name="Itoh T."/>
            <person name="Shigeta K."/>
            <person name="Senba T."/>
            <person name="Matsumura K."/>
            <person name="Nakajima Y."/>
            <person name="Mizuno T."/>
            <person name="Morinaga M."/>
            <person name="Sasaki M."/>
            <person name="Togashi T."/>
            <person name="Oyama M."/>
            <person name="Hata H."/>
            <person name="Watanabe M."/>
            <person name="Komatsu T."/>
            <person name="Mizushima-Sugano J."/>
            <person name="Satoh T."/>
            <person name="Shirai Y."/>
            <person name="Takahashi Y."/>
            <person name="Nakagawa K."/>
            <person name="Okumura K."/>
            <person name="Nagase T."/>
            <person name="Nomura N."/>
            <person name="Kikuchi H."/>
            <person name="Masuho Y."/>
            <person name="Yamashita R."/>
            <person name="Nakai K."/>
            <person name="Yada T."/>
            <person name="Nakamura Y."/>
            <person name="Ohara O."/>
            <person name="Isogai T."/>
            <person name="Sugano S."/>
        </authorList>
    </citation>
    <scope>NUCLEOTIDE SEQUENCE [LARGE SCALE MRNA] (ISOFORM 2)</scope>
    <scope>VARIANT VAL-36</scope>
</reference>
<reference key="4">
    <citation type="submission" date="2005-04" db="EMBL/GenBank/DDBJ databases">
        <authorList>
            <person name="Totoki Y."/>
            <person name="Toyoda A."/>
            <person name="Takeda T."/>
            <person name="Sakaki Y."/>
            <person name="Tanaka A."/>
            <person name="Yokoyama S."/>
        </authorList>
    </citation>
    <scope>NUCLEOTIDE SEQUENCE [LARGE SCALE MRNA] (ISOFORM 1)</scope>
    <scope>VARIANT VAL-36</scope>
    <source>
        <tissue>Spleen</tissue>
    </source>
</reference>
<reference key="5">
    <citation type="journal article" date="2004" name="Nature">
        <title>The DNA sequence and comparative analysis of human chromosome 10.</title>
        <authorList>
            <person name="Deloukas P."/>
            <person name="Earthrowl M.E."/>
            <person name="Grafham D.V."/>
            <person name="Rubenfield M."/>
            <person name="French L."/>
            <person name="Steward C.A."/>
            <person name="Sims S.K."/>
            <person name="Jones M.C."/>
            <person name="Searle S."/>
            <person name="Scott C."/>
            <person name="Howe K."/>
            <person name="Hunt S.E."/>
            <person name="Andrews T.D."/>
            <person name="Gilbert J.G.R."/>
            <person name="Swarbreck D."/>
            <person name="Ashurst J.L."/>
            <person name="Taylor A."/>
            <person name="Battles J."/>
            <person name="Bird C.P."/>
            <person name="Ainscough R."/>
            <person name="Almeida J.P."/>
            <person name="Ashwell R.I.S."/>
            <person name="Ambrose K.D."/>
            <person name="Babbage A.K."/>
            <person name="Bagguley C.L."/>
            <person name="Bailey J."/>
            <person name="Banerjee R."/>
            <person name="Bates K."/>
            <person name="Beasley H."/>
            <person name="Bray-Allen S."/>
            <person name="Brown A.J."/>
            <person name="Brown J.Y."/>
            <person name="Burford D.C."/>
            <person name="Burrill W."/>
            <person name="Burton J."/>
            <person name="Cahill P."/>
            <person name="Camire D."/>
            <person name="Carter N.P."/>
            <person name="Chapman J.C."/>
            <person name="Clark S.Y."/>
            <person name="Clarke G."/>
            <person name="Clee C.M."/>
            <person name="Clegg S."/>
            <person name="Corby N."/>
            <person name="Coulson A."/>
            <person name="Dhami P."/>
            <person name="Dutta I."/>
            <person name="Dunn M."/>
            <person name="Faulkner L."/>
            <person name="Frankish A."/>
            <person name="Frankland J.A."/>
            <person name="Garner P."/>
            <person name="Garnett J."/>
            <person name="Gribble S."/>
            <person name="Griffiths C."/>
            <person name="Grocock R."/>
            <person name="Gustafson E."/>
            <person name="Hammond S."/>
            <person name="Harley J.L."/>
            <person name="Hart E."/>
            <person name="Heath P.D."/>
            <person name="Ho T.P."/>
            <person name="Hopkins B."/>
            <person name="Horne J."/>
            <person name="Howden P.J."/>
            <person name="Huckle E."/>
            <person name="Hynds C."/>
            <person name="Johnson C."/>
            <person name="Johnson D."/>
            <person name="Kana A."/>
            <person name="Kay M."/>
            <person name="Kimberley A.M."/>
            <person name="Kershaw J.K."/>
            <person name="Kokkinaki M."/>
            <person name="Laird G.K."/>
            <person name="Lawlor S."/>
            <person name="Lee H.M."/>
            <person name="Leongamornlert D.A."/>
            <person name="Laird G."/>
            <person name="Lloyd C."/>
            <person name="Lloyd D.M."/>
            <person name="Loveland J."/>
            <person name="Lovell J."/>
            <person name="McLaren S."/>
            <person name="McLay K.E."/>
            <person name="McMurray A."/>
            <person name="Mashreghi-Mohammadi M."/>
            <person name="Matthews L."/>
            <person name="Milne S."/>
            <person name="Nickerson T."/>
            <person name="Nguyen M."/>
            <person name="Overton-Larty E."/>
            <person name="Palmer S.A."/>
            <person name="Pearce A.V."/>
            <person name="Peck A.I."/>
            <person name="Pelan S."/>
            <person name="Phillimore B."/>
            <person name="Porter K."/>
            <person name="Rice C.M."/>
            <person name="Rogosin A."/>
            <person name="Ross M.T."/>
            <person name="Sarafidou T."/>
            <person name="Sehra H.K."/>
            <person name="Shownkeen R."/>
            <person name="Skuce C.D."/>
            <person name="Smith M."/>
            <person name="Standring L."/>
            <person name="Sycamore N."/>
            <person name="Tester J."/>
            <person name="Thorpe A."/>
            <person name="Torcasso W."/>
            <person name="Tracey A."/>
            <person name="Tromans A."/>
            <person name="Tsolas J."/>
            <person name="Wall M."/>
            <person name="Walsh J."/>
            <person name="Wang H."/>
            <person name="Weinstock K."/>
            <person name="West A.P."/>
            <person name="Willey D.L."/>
            <person name="Whitehead S.L."/>
            <person name="Wilming L."/>
            <person name="Wray P.W."/>
            <person name="Young L."/>
            <person name="Chen Y."/>
            <person name="Lovering R.C."/>
            <person name="Moschonas N.K."/>
            <person name="Siebert R."/>
            <person name="Fechtel K."/>
            <person name="Bentley D."/>
            <person name="Durbin R.M."/>
            <person name="Hubbard T."/>
            <person name="Doucette-Stamm L."/>
            <person name="Beck S."/>
            <person name="Smith D.R."/>
            <person name="Rogers J."/>
        </authorList>
    </citation>
    <scope>NUCLEOTIDE SEQUENCE [LARGE SCALE GENOMIC DNA]</scope>
</reference>
<reference key="6">
    <citation type="journal article" date="2004" name="Genome Res.">
        <title>The status, quality, and expansion of the NIH full-length cDNA project: the Mammalian Gene Collection (MGC).</title>
        <authorList>
            <consortium name="The MGC Project Team"/>
        </authorList>
    </citation>
    <scope>NUCLEOTIDE SEQUENCE [LARGE SCALE MRNA] (ISOFORM 1)</scope>
    <scope>VARIANTS VAL-36 AND TYR-48</scope>
    <source>
        <tissue>Brain</tissue>
        <tissue>Skin</tissue>
    </source>
</reference>
<reference key="7">
    <citation type="journal article" date="1999" name="Pathol. Int.">
        <title>Novel human PDCD4 (H731) gene expressed in proliferative cells is expressed in the small duct epithelial cells of the breast as revealed by an anti-H731 antibody.</title>
        <authorList>
            <person name="Yoshinaga H."/>
            <person name="Matsuhashi S."/>
            <person name="Fujiyama C."/>
            <person name="Masaki Z."/>
        </authorList>
    </citation>
    <scope>SUBCELLULAR LOCATION</scope>
    <scope>TISSUE SPECIFICITY</scope>
</reference>
<reference key="8">
    <citation type="journal article" date="2003" name="J. Pathol.">
        <title>Loss of PDCD4 expression in human lung cancer correlates with tumour progression and prognosis.</title>
        <authorList>
            <person name="Chen Y."/>
            <person name="Knosel T."/>
            <person name="Kristiansen G."/>
            <person name="Pietas A."/>
            <person name="Garber M.E."/>
            <person name="Matsuhashi S."/>
            <person name="Ozaki I."/>
            <person name="Petersen I."/>
        </authorList>
    </citation>
    <scope>TISSUE SPECIFICITY</scope>
</reference>
<reference key="9">
    <citation type="journal article" date="2004" name="Anal. Chem.">
        <title>Robust phosphoproteomic profiling of tyrosine phosphorylation sites from human T cells using immobilized metal affinity chromatography and tandem mass spectrometry.</title>
        <authorList>
            <person name="Brill L.M."/>
            <person name="Salomon A.R."/>
            <person name="Ficarro S.B."/>
            <person name="Mukherji M."/>
            <person name="Stettler-Gill M."/>
            <person name="Peters E.C."/>
        </authorList>
    </citation>
    <scope>PHOSPHORYLATION [LARGE SCALE ANALYSIS] AT SER-457</scope>
    <scope>IDENTIFICATION BY MASS SPECTROMETRY [LARGE SCALE ANALYSIS]</scope>
    <source>
        <tissue>Leukemic T-cell</tissue>
    </source>
</reference>
<reference key="10">
    <citation type="journal article" date="2005" name="Cancer Res.">
        <title>Akt phosphorylates and regulates Pdcd4 tumor suppressor protein.</title>
        <authorList>
            <person name="Palamarchuk A."/>
            <person name="Efanov A."/>
            <person name="Maximov V."/>
            <person name="Aqeilan R.I."/>
            <person name="Croce C.M."/>
            <person name="Pekarsky Y."/>
        </authorList>
    </citation>
    <scope>PHOSPHORYLATION AT SER-67 AND SER-457 BY PKB</scope>
    <scope>FUNCTION</scope>
    <scope>MUTAGENESIS OF SER-67 AND SER-457</scope>
    <scope>SUBCELLULAR LOCATION</scope>
</reference>
<reference key="11">
    <citation type="journal article" date="2005" name="Nat. Biotechnol.">
        <title>Immunoaffinity profiling of tyrosine phosphorylation in cancer cells.</title>
        <authorList>
            <person name="Rush J."/>
            <person name="Moritz A."/>
            <person name="Lee K.A."/>
            <person name="Guo A."/>
            <person name="Goss V.L."/>
            <person name="Spek E.J."/>
            <person name="Zhang H."/>
            <person name="Zha X.-M."/>
            <person name="Polakiewicz R.D."/>
            <person name="Comb M.J."/>
        </authorList>
    </citation>
    <scope>PHOSPHORYLATION [LARGE SCALE ANALYSIS] AT TYR-152</scope>
    <scope>IDENTIFICATION BY MASS SPECTROMETRY [LARGE SCALE ANALYSIS]</scope>
</reference>
<reference key="12">
    <citation type="journal article" date="2006" name="Cell">
        <title>Global, in vivo, and site-specific phosphorylation dynamics in signaling networks.</title>
        <authorList>
            <person name="Olsen J.V."/>
            <person name="Blagoev B."/>
            <person name="Gnad F."/>
            <person name="Macek B."/>
            <person name="Kumar C."/>
            <person name="Mortensen P."/>
            <person name="Mann M."/>
        </authorList>
    </citation>
    <scope>PHOSPHORYLATION [LARGE SCALE ANALYSIS] AT SER-457</scope>
    <scope>IDENTIFICATION BY MASS SPECTROMETRY [LARGE SCALE ANALYSIS]</scope>
    <source>
        <tissue>Cervix carcinoma</tissue>
    </source>
</reference>
<reference key="13">
    <citation type="journal article" date="2006" name="Mol. Cell. Biol.">
        <title>Tumorigenesis suppressor Pdcd4 down-regulates mitogen-activated protein kinase kinase kinase kinase 1 expression to suppress colon carcinoma cell invasion.</title>
        <authorList>
            <person name="Yang H.-S."/>
            <person name="Matthews C.P."/>
            <person name="Clair T."/>
            <person name="Wang Q."/>
            <person name="Baker A.R."/>
            <person name="Li C.-C."/>
            <person name="Tan T.-H."/>
            <person name="Colburn N.H."/>
        </authorList>
    </citation>
    <scope>FUNCTION</scope>
    <scope>TISSUE SPECIFICITY</scope>
</reference>
<reference key="14">
    <citation type="journal article" date="2006" name="Nat. Biotechnol.">
        <title>A probability-based approach for high-throughput protein phosphorylation analysis and site localization.</title>
        <authorList>
            <person name="Beausoleil S.A."/>
            <person name="Villen J."/>
            <person name="Gerber S.A."/>
            <person name="Rush J."/>
            <person name="Gygi S.P."/>
        </authorList>
    </citation>
    <scope>PHOSPHORYLATION [LARGE SCALE ANALYSIS] AT SER-457</scope>
    <scope>IDENTIFICATION BY MASS SPECTROMETRY [LARGE SCALE ANALYSIS]</scope>
    <source>
        <tissue>Cervix carcinoma</tissue>
    </source>
</reference>
<reference key="15">
    <citation type="journal article" date="2006" name="Science">
        <title>S6K1- and betaTRCP-mediated degradation of PDCD4 promotes protein translation and cell growth.</title>
        <authorList>
            <person name="Dorrello N.V."/>
            <person name="Peschiaroli A."/>
            <person name="Guardavaccaro D."/>
            <person name="Colburn N.H."/>
            <person name="Sherman N.E."/>
            <person name="Pagano M."/>
        </authorList>
    </citation>
    <scope>FUNCTION</scope>
    <scope>PHOSPHORYLATION AT SER-67 BY RPS6KB1</scope>
    <scope>PHOSPHODEGRON MOTIF</scope>
    <scope>INTERACTION WITH BTRC AND FBXW11</scope>
    <scope>UBIQUITINATION</scope>
    <scope>IDENTIFICATION BY MASS SPECTROMETRY</scope>
    <scope>MUTAGENESIS OF SER-67; SER-71 AND SER-76</scope>
</reference>
<reference key="16">
    <citation type="journal article" date="2008" name="Proc. Natl. Acad. Sci. U.S.A.">
        <title>A quantitative atlas of mitotic phosphorylation.</title>
        <authorList>
            <person name="Dephoure N."/>
            <person name="Zhou C."/>
            <person name="Villen J."/>
            <person name="Beausoleil S.A."/>
            <person name="Bakalarski C.E."/>
            <person name="Elledge S.J."/>
            <person name="Gygi S.P."/>
        </authorList>
    </citation>
    <scope>PHOSPHORYLATION [LARGE SCALE ANALYSIS] AT SER-76; SER-78; SER-80 AND SER-94</scope>
    <scope>IDENTIFICATION BY MASS SPECTROMETRY [LARGE SCALE ANALYSIS]</scope>
    <source>
        <tissue>Cervix carcinoma</tissue>
    </source>
</reference>
<reference key="17">
    <citation type="journal article" date="2009" name="Anal. Chem.">
        <title>Lys-N and trypsin cover complementary parts of the phosphoproteome in a refined SCX-based approach.</title>
        <authorList>
            <person name="Gauci S."/>
            <person name="Helbig A.O."/>
            <person name="Slijper M."/>
            <person name="Krijgsveld J."/>
            <person name="Heck A.J."/>
            <person name="Mohammed S."/>
        </authorList>
    </citation>
    <scope>IDENTIFICATION BY MASS SPECTROMETRY [LARGE SCALE ANALYSIS]</scope>
</reference>
<reference key="18">
    <citation type="journal article" date="2010" name="Sci. Signal.">
        <title>Quantitative phosphoproteomics reveals widespread full phosphorylation site occupancy during mitosis.</title>
        <authorList>
            <person name="Olsen J.V."/>
            <person name="Vermeulen M."/>
            <person name="Santamaria A."/>
            <person name="Kumar C."/>
            <person name="Miller M.L."/>
            <person name="Jensen L.J."/>
            <person name="Gnad F."/>
            <person name="Cox J."/>
            <person name="Jensen T.S."/>
            <person name="Nigg E.A."/>
            <person name="Brunak S."/>
            <person name="Mann M."/>
        </authorList>
    </citation>
    <scope>ACETYLATION [LARGE SCALE ANALYSIS] AT MET-1</scope>
    <scope>PHOSPHORYLATION [LARGE SCALE ANALYSIS] AT SER-76; SER-78; SER-94 AND SER-457</scope>
    <scope>VARIANT [LARGE SCALE ANALYSIS] VAL-36</scope>
    <scope>IDENTIFICATION BY MASS SPECTROMETRY [LARGE SCALE ANALYSIS]</scope>
    <source>
        <tissue>Cervix carcinoma</tissue>
    </source>
</reference>
<reference key="19">
    <citation type="journal article" date="2011" name="BMC Syst. Biol.">
        <title>Initial characterization of the human central proteome.</title>
        <authorList>
            <person name="Burkard T.R."/>
            <person name="Planyavsky M."/>
            <person name="Kaupe I."/>
            <person name="Breitwieser F.P."/>
            <person name="Buerckstuemmer T."/>
            <person name="Bennett K.L."/>
            <person name="Superti-Furga G."/>
            <person name="Colinge J."/>
        </authorList>
    </citation>
    <scope>IDENTIFICATION BY MASS SPECTROMETRY [LARGE SCALE ANALYSIS]</scope>
</reference>
<reference key="20">
    <citation type="journal article" date="2011" name="Sci. Signal.">
        <title>System-wide temporal characterization of the proteome and phosphoproteome of human embryonic stem cell differentiation.</title>
        <authorList>
            <person name="Rigbolt K.T."/>
            <person name="Prokhorova T.A."/>
            <person name="Akimov V."/>
            <person name="Henningsen J."/>
            <person name="Johansen P.T."/>
            <person name="Kratchmarova I."/>
            <person name="Kassem M."/>
            <person name="Mann M."/>
            <person name="Olsen J.V."/>
            <person name="Blagoev B."/>
        </authorList>
    </citation>
    <scope>PHOSPHORYLATION [LARGE SCALE ANALYSIS] AT SER-457</scope>
    <scope>IDENTIFICATION BY MASS SPECTROMETRY [LARGE SCALE ANALYSIS]</scope>
</reference>
<reference key="21">
    <citation type="journal article" date="2013" name="J. Proteome Res.">
        <title>Toward a comprehensive characterization of a human cancer cell phosphoproteome.</title>
        <authorList>
            <person name="Zhou H."/>
            <person name="Di Palma S."/>
            <person name="Preisinger C."/>
            <person name="Peng M."/>
            <person name="Polat A.N."/>
            <person name="Heck A.J."/>
            <person name="Mohammed S."/>
        </authorList>
    </citation>
    <scope>PHOSPHORYLATION [LARGE SCALE ANALYSIS] AT SER-71; SER-76; SER-78; SER-313; SER-317 AND SER-457</scope>
    <scope>IDENTIFICATION BY MASS SPECTROMETRY [LARGE SCALE ANALYSIS]</scope>
    <source>
        <tissue>Cervix carcinoma</tissue>
        <tissue>Erythroleukemia</tissue>
    </source>
</reference>
<reference key="22">
    <citation type="journal article" date="2014" name="J. Proteomics">
        <title>An enzyme assisted RP-RPLC approach for in-depth analysis of human liver phosphoproteome.</title>
        <authorList>
            <person name="Bian Y."/>
            <person name="Song C."/>
            <person name="Cheng K."/>
            <person name="Dong M."/>
            <person name="Wang F."/>
            <person name="Huang J."/>
            <person name="Sun D."/>
            <person name="Wang L."/>
            <person name="Ye M."/>
            <person name="Zou H."/>
        </authorList>
    </citation>
    <scope>PHOSPHORYLATION [LARGE SCALE ANALYSIS] AT SER-67; SER-68; SER-71; SER-76; SER-78; SER-313 AND SER-317</scope>
    <scope>IDENTIFICATION BY MASS SPECTROMETRY [LARGE SCALE ANALYSIS]</scope>
    <source>
        <tissue>Liver</tissue>
    </source>
</reference>
<reference key="23">
    <citation type="journal article" date="2015" name="Proteomics">
        <title>N-terminome analysis of the human mitochondrial proteome.</title>
        <authorList>
            <person name="Vaca Jacome A.S."/>
            <person name="Rabilloud T."/>
            <person name="Schaeffer-Reiss C."/>
            <person name="Rompais M."/>
            <person name="Ayoub D."/>
            <person name="Lane L."/>
            <person name="Bairoch A."/>
            <person name="Van Dorsselaer A."/>
            <person name="Carapito C."/>
        </authorList>
    </citation>
    <scope>IDENTIFICATION BY MASS SPECTROMETRY [LARGE SCALE ANALYSIS]</scope>
</reference>
<reference key="24">
    <citation type="submission" date="2007-04" db="PDB data bank">
        <title>Solution structure of the MA3 domain of human programmed cell death 4.</title>
        <authorList>
            <consortium name="RIKEN structural genomics initiative (RSGI)"/>
        </authorList>
    </citation>
    <scope>STRUCTURE BY NMR OF 320-450</scope>
</reference>
<reference key="25">
    <citation type="journal article" date="2008" name="Proc. Natl. Acad. Sci. U.S.A.">
        <title>PDCD4 inhibits translation initiation by binding to eIF4A using both its MA3 domains.</title>
        <authorList>
            <person name="Suzuki C."/>
            <person name="Garces R.G."/>
            <person name="Edmonds K.A."/>
            <person name="Hiller S."/>
            <person name="Hyberts S.G."/>
            <person name="Marintchev A."/>
            <person name="Wagner G."/>
        </authorList>
    </citation>
    <scope>X-RAY CRYSTALLOGRAPHY (1.8 ANGSTROMS) OF 157-320</scope>
    <scope>FUNCTION</scope>
    <scope>DOMAIN</scope>
    <scope>INTERACTION WITH EIF4A</scope>
    <scope>SUBUNIT</scope>
</reference>
<reference key="26">
    <citation type="journal article" date="2009" name="EMBO J.">
        <title>Structural basis for translational inhibition by the tumour suppressor Pdcd4.</title>
        <authorList>
            <person name="Loh P.G."/>
            <person name="Yang H.S."/>
            <person name="Walsh M.A."/>
            <person name="Wang Q."/>
            <person name="Wang X."/>
            <person name="Cheng Z."/>
            <person name="Liu D."/>
            <person name="Song H."/>
        </authorList>
    </citation>
    <scope>X-RAY CRYSTALLOGRAPHY (2.8 ANGSTROMS) OF 157-469</scope>
    <scope>FUNCTION</scope>
    <scope>INTERACTION WITH EIF4A1 AND EIF4G</scope>
    <scope>SUBUNIT</scope>
    <scope>MUTAGENESIS OF GLU-174; GLU-210; GLU-249; LEU-252; ASP-253; PRO-255; HIS-358; ASP-414; ASP-418 AND PRO-420</scope>
</reference>
<reference key="27">
    <citation type="journal article" date="2009" name="Proc. Natl. Acad. Sci. U.S.A.">
        <title>Crystal structure of the eIF4A-PDCD4 complex.</title>
        <authorList>
            <person name="Chang J.H."/>
            <person name="Cho Y.H."/>
            <person name="Sohn S.Y."/>
            <person name="Choi J.M."/>
            <person name="Kim A."/>
            <person name="Kim Y.C."/>
            <person name="Jang S.K."/>
            <person name="Cho Y."/>
        </authorList>
    </citation>
    <scope>X-RAY CRYSTALLOGRAPHY (2.8 ANGSTROMS) OF 163-469 IN COMPLEX WITH EIF4A1</scope>
    <scope>FUNCTION</scope>
    <scope>SUBUNIT</scope>
    <scope>DOMAIN</scope>
    <scope>MUTAGENESIS OF ASP-253; MET-333; GLU-337; LEU-340; PHE-359 AND HIS-361</scope>
</reference>
<reference key="28">
    <citation type="journal article" date="2006" name="Science">
        <title>The consensus coding sequences of human breast and colorectal cancers.</title>
        <authorList>
            <person name="Sjoeblom T."/>
            <person name="Jones S."/>
            <person name="Wood L.D."/>
            <person name="Parsons D.W."/>
            <person name="Lin J."/>
            <person name="Barber T.D."/>
            <person name="Mandelker D."/>
            <person name="Leary R.J."/>
            <person name="Ptak J."/>
            <person name="Silliman N."/>
            <person name="Szabo S."/>
            <person name="Buckhaults P."/>
            <person name="Farrell C."/>
            <person name="Meeh P."/>
            <person name="Markowitz S.D."/>
            <person name="Willis J."/>
            <person name="Dawson D."/>
            <person name="Willson J.K.V."/>
            <person name="Gazdar A.F."/>
            <person name="Hartigan J."/>
            <person name="Wu L."/>
            <person name="Liu C."/>
            <person name="Parmigiani G."/>
            <person name="Park B.H."/>
            <person name="Bachman K.E."/>
            <person name="Papadopoulos N."/>
            <person name="Vogelstein B."/>
            <person name="Kinzler K.W."/>
            <person name="Velculescu V.E."/>
        </authorList>
    </citation>
    <scope>VARIANT [LARGE SCALE ANALYSIS] ARG-120</scope>
</reference>
<gene>
    <name type="primary">PDCD4</name>
    <name type="synonym">H731</name>
</gene>
<protein>
    <recommendedName>
        <fullName>Programmed cell death protein 4</fullName>
    </recommendedName>
    <alternativeName>
        <fullName>Neoplastic transformation inhibitor protein</fullName>
    </alternativeName>
    <alternativeName>
        <fullName>Nuclear antigen H731-like</fullName>
    </alternativeName>
    <alternativeName>
        <fullName>Protein 197/15a</fullName>
    </alternativeName>
</protein>
<proteinExistence type="evidence at protein level"/>
<evidence type="ECO:0000250" key="1"/>
<evidence type="ECO:0000250" key="2">
    <source>
        <dbReference type="UniProtKB" id="Q61823"/>
    </source>
</evidence>
<evidence type="ECO:0000250" key="3">
    <source>
        <dbReference type="UniProtKB" id="Q9JID1"/>
    </source>
</evidence>
<evidence type="ECO:0000255" key="4"/>
<evidence type="ECO:0000255" key="5">
    <source>
        <dbReference type="PROSITE-ProRule" id="PRU00698"/>
    </source>
</evidence>
<evidence type="ECO:0000256" key="6">
    <source>
        <dbReference type="SAM" id="MobiDB-lite"/>
    </source>
</evidence>
<evidence type="ECO:0000269" key="7">
    <source>
    </source>
</evidence>
<evidence type="ECO:0000269" key="8">
    <source>
    </source>
</evidence>
<evidence type="ECO:0000269" key="9">
    <source>
    </source>
</evidence>
<evidence type="ECO:0000269" key="10">
    <source>
    </source>
</evidence>
<evidence type="ECO:0000269" key="11">
    <source>
    </source>
</evidence>
<evidence type="ECO:0000269" key="12">
    <source>
    </source>
</evidence>
<evidence type="ECO:0000269" key="13">
    <source>
    </source>
</evidence>
<evidence type="ECO:0000269" key="14">
    <source>
    </source>
</evidence>
<evidence type="ECO:0000269" key="15">
    <source>
    </source>
</evidence>
<evidence type="ECO:0000269" key="16">
    <source>
    </source>
</evidence>
<evidence type="ECO:0000269" key="17">
    <source>
    </source>
</evidence>
<evidence type="ECO:0000269" key="18">
    <source>
    </source>
</evidence>
<evidence type="ECO:0000269" key="19">
    <source ref="1"/>
</evidence>
<evidence type="ECO:0000269" key="20">
    <source ref="4"/>
</evidence>
<evidence type="ECO:0000303" key="21">
    <source>
    </source>
</evidence>
<evidence type="ECO:0000305" key="22"/>
<evidence type="ECO:0007744" key="23">
    <source>
    </source>
</evidence>
<evidence type="ECO:0007744" key="24">
    <source>
    </source>
</evidence>
<evidence type="ECO:0007744" key="25">
    <source>
    </source>
</evidence>
<evidence type="ECO:0007744" key="26">
    <source>
    </source>
</evidence>
<evidence type="ECO:0007744" key="27">
    <source>
    </source>
</evidence>
<evidence type="ECO:0007744" key="28">
    <source>
    </source>
</evidence>
<evidence type="ECO:0007744" key="29">
    <source>
    </source>
</evidence>
<evidence type="ECO:0007744" key="30">
    <source>
    </source>
</evidence>
<evidence type="ECO:0007744" key="31">
    <source>
    </source>
</evidence>
<evidence type="ECO:0007829" key="32">
    <source>
        <dbReference type="PDB" id="2KZT"/>
    </source>
</evidence>
<evidence type="ECO:0007829" key="33">
    <source>
        <dbReference type="PDB" id="2RG8"/>
    </source>
</evidence>
<evidence type="ECO:0007829" key="34">
    <source>
        <dbReference type="PDB" id="2ZU6"/>
    </source>
</evidence>
<feature type="chain" id="PRO_0000256519" description="Programmed cell death protein 4">
    <location>
        <begin position="1"/>
        <end position="469"/>
    </location>
</feature>
<feature type="domain" description="MI 1" evidence="5">
    <location>
        <begin position="163"/>
        <end position="284"/>
    </location>
</feature>
<feature type="domain" description="MI 2" evidence="5">
    <location>
        <begin position="326"/>
        <end position="449"/>
    </location>
</feature>
<feature type="region of interest" description="Disordered" evidence="6">
    <location>
        <begin position="1"/>
        <end position="38"/>
    </location>
</feature>
<feature type="region of interest" description="Disordered" evidence="6">
    <location>
        <begin position="58"/>
        <end position="128"/>
    </location>
</feature>
<feature type="short sequence motif" description="Nuclear localization signal" evidence="4">
    <location>
        <begin position="58"/>
        <end position="64"/>
    </location>
</feature>
<feature type="short sequence motif" description="Phosphodegron">
    <location>
        <begin position="70"/>
        <end position="76"/>
    </location>
</feature>
<feature type="short sequence motif" description="Nuclear localization signal" evidence="4">
    <location>
        <begin position="241"/>
        <end position="250"/>
    </location>
</feature>
<feature type="compositionally biased region" description="Low complexity" evidence="6">
    <location>
        <begin position="74"/>
        <end position="83"/>
    </location>
</feature>
<feature type="compositionally biased region" description="Gly residues" evidence="6">
    <location>
        <begin position="114"/>
        <end position="125"/>
    </location>
</feature>
<feature type="modified residue" description="N-acetylmethionine" evidence="28">
    <location>
        <position position="1"/>
    </location>
</feature>
<feature type="modified residue" description="Phosphoserine" evidence="3">
    <location>
        <position position="25"/>
    </location>
</feature>
<feature type="modified residue" description="Phosphoserine; by PKB and RPS6KB1" evidence="11 14 31">
    <location>
        <position position="67"/>
    </location>
</feature>
<feature type="modified residue" description="Phosphoserine" evidence="31">
    <location>
        <position position="68"/>
    </location>
</feature>
<feature type="modified residue" description="Phosphoserine" evidence="30 31">
    <location>
        <position position="71"/>
    </location>
</feature>
<feature type="modified residue" description="Phosphoserine" evidence="27 28 30 31">
    <location>
        <position position="76"/>
    </location>
</feature>
<feature type="modified residue" description="Phosphoserine" evidence="27 28 30 31">
    <location>
        <position position="78"/>
    </location>
</feature>
<feature type="modified residue" description="Phosphoserine" evidence="27">
    <location>
        <position position="80"/>
    </location>
</feature>
<feature type="modified residue" description="Phosphoserine" evidence="27 28">
    <location>
        <position position="94"/>
    </location>
</feature>
<feature type="modified residue" description="Phosphotyrosine" evidence="24">
    <location>
        <position position="152"/>
    </location>
</feature>
<feature type="modified residue" description="Phosphoserine" evidence="30 31">
    <location>
        <position position="313"/>
    </location>
</feature>
<feature type="modified residue" description="Phosphoserine" evidence="30 31">
    <location>
        <position position="317"/>
    </location>
</feature>
<feature type="modified residue" description="Phosphoserine; by PKB" evidence="11 23 25 26 28 29 30">
    <location>
        <position position="457"/>
    </location>
</feature>
<feature type="splice variant" id="VSP_045622" description="In isoform 2." evidence="21">
    <original>MDVENEQILNVNPAD</original>
    <variation>MTKY</variation>
    <location>
        <begin position="1"/>
        <end position="15"/>
    </location>
</feature>
<feature type="sequence variant" id="VAR_028901" description="In dbSNP:rs7081726." evidence="9 10 18 19 20 28">
    <original>I</original>
    <variation>V</variation>
    <location>
        <position position="36"/>
    </location>
</feature>
<feature type="sequence variant" id="VAR_028902" description="In dbSNP:rs11548765." evidence="10">
    <original>S</original>
    <variation>Y</variation>
    <location>
        <position position="48"/>
    </location>
</feature>
<feature type="sequence variant" id="VAR_036375" description="In a breast cancer sample; somatic mutation." evidence="13">
    <original>G</original>
    <variation>R</variation>
    <location>
        <position position="120"/>
    </location>
</feature>
<feature type="mutagenesis site" description="Loss of phosphorylation site. Reduces interaction with BTRC. Abolishes phosphorylation by PKB; when associated with A-457." evidence="11 14">
    <original>S</original>
    <variation>A</variation>
    <location>
        <position position="67"/>
    </location>
</feature>
<feature type="mutagenesis site" description="Strongly reduced interaction with BTRC. Strongly reduced ubiquitination." evidence="14">
    <original>S</original>
    <variation>A</variation>
    <location>
        <position position="71"/>
    </location>
</feature>
<feature type="mutagenesis site" description="Strongly reduced interaction with BTRC. Strongly reduced ubiquitination." evidence="14">
    <original>S</original>
    <variation>A</variation>
    <location>
        <position position="76"/>
    </location>
</feature>
<feature type="mutagenesis site" description="Reduced inhibition of EIF4A1 helicase activity." evidence="16">
    <original>E</original>
    <variation>A</variation>
    <location>
        <position position="174"/>
    </location>
</feature>
<feature type="mutagenesis site" description="Reduced inhibition of EIF4A1 helicase activity. Strongly reduced inhibition of translation." evidence="16">
    <original>E</original>
    <variation>A</variation>
    <location>
        <position position="210"/>
    </location>
</feature>
<feature type="mutagenesis site" description="Reduced interaction with EIF4A1." evidence="16">
    <original>E</original>
    <variation>A</variation>
    <location>
        <position position="249"/>
    </location>
</feature>
<feature type="mutagenesis site" description="Strongly reduced interaction with EIF4A1. Reduced inhibition of EIF4A1 helicase activity. Strongly reduced inhibition of translation." evidence="16">
    <original>L</original>
    <variation>A</variation>
    <location>
        <position position="252"/>
    </location>
</feature>
<feature type="mutagenesis site" description="Strongly reduced interaction with EIF4A1. Strongly reduced inhibition of translation. Reduced inhibition of EIF4A1 helicase activity." evidence="16 17">
    <original>D</original>
    <variation>A</variation>
    <location>
        <position position="253"/>
    </location>
</feature>
<feature type="mutagenesis site" description="Reduced inhibition of EIF4A1 helicase activity. Strongly reduced inhibition of translation." evidence="16">
    <original>P</original>
    <variation>A</variation>
    <location>
        <position position="255"/>
    </location>
</feature>
<feature type="mutagenesis site" description="No effect on inhibition of EIF4A1 and on inhibition of translation; when associated with A-340." evidence="17">
    <original>M</original>
    <variation>A</variation>
    <location>
        <position position="333"/>
    </location>
</feature>
<feature type="mutagenesis site" description="No effect on inhibition of EIF4A1 and on inhibition of translation." evidence="17">
    <original>E</original>
    <variation>A</variation>
    <location>
        <position position="337"/>
    </location>
</feature>
<feature type="mutagenesis site" description="No effect on inhibition of EIF4A1 and on inhibition of translation; when associated with A-333." evidence="17">
    <original>L</original>
    <variation>A</variation>
    <location>
        <position position="340"/>
    </location>
</feature>
<feature type="mutagenesis site" description="Strongly reduced interaction with EIF4A1." evidence="16">
    <original>H</original>
    <variation>A</variation>
    <location>
        <position position="358"/>
    </location>
</feature>
<feature type="mutagenesis site" description="Strongly reduced inhibition of EIF4A1. Strongly reduced inhibition of translation." evidence="17">
    <original>F</original>
    <variation>A</variation>
    <location>
        <position position="359"/>
    </location>
</feature>
<feature type="mutagenesis site" description="Strongly reduced inhibition of EIF4A1. Strongly reduced inhibition of translation." evidence="17">
    <original>H</original>
    <variation>A</variation>
    <location>
        <position position="361"/>
    </location>
</feature>
<feature type="mutagenesis site" description="Strongly reduced interaction with EIF4A1. Strongly reduced inhibition of translation." evidence="16">
    <original>D</original>
    <variation>A</variation>
    <location>
        <position position="414"/>
    </location>
</feature>
<feature type="mutagenesis site" description="Reduced interaction with EIF4A1. Strongly reduced inhibition of translation." evidence="16">
    <original>D</original>
    <variation>A</variation>
    <location>
        <position position="418"/>
    </location>
</feature>
<feature type="mutagenesis site" description="Strongly reduced interaction with EIF4A1. Strongly reduced inhibition of translation." evidence="16">
    <original>P</original>
    <variation>A</variation>
    <location>
        <position position="420"/>
    </location>
</feature>
<feature type="mutagenesis site" description="Loss of phosphorylation site, and loss of nuclear accumulation. Abolishes phosphorylation by PKB; when associated with A-67." evidence="11">
    <original>S</original>
    <variation>A</variation>
    <location>
        <position position="457"/>
    </location>
</feature>
<feature type="sequence conflict" description="In Ref. 1; AAB42218." evidence="22" ref="1">
    <original>D</original>
    <variation>E</variation>
    <location>
        <position position="79"/>
    </location>
</feature>
<feature type="sequence conflict" description="In Ref. 2; AAB67706." evidence="22" ref="2">
    <original>R</original>
    <variation>G</variation>
    <location>
        <position position="102"/>
    </location>
</feature>
<feature type="sequence conflict" description="In Ref. 2; AAB67706." evidence="22" ref="2">
    <original>V</original>
    <variation>G</variation>
    <location>
        <position position="130"/>
    </location>
</feature>
<feature type="sequence conflict" description="In Ref. 1; AAB42218." evidence="22" ref="1">
    <original>S</original>
    <variation>T</variation>
    <location>
        <position position="220"/>
    </location>
</feature>
<feature type="sequence conflict" description="In Ref. 2; AAB67706." evidence="22" ref="2">
    <original>L</original>
    <variation>F</variation>
    <location>
        <position position="222"/>
    </location>
</feature>
<feature type="sequence conflict" description="In Ref. 3; BAG37701." evidence="22" ref="3">
    <original>K</original>
    <variation>R</variation>
    <location>
        <position position="309"/>
    </location>
</feature>
<feature type="sequence conflict" description="In Ref. 3; BAG37701." evidence="22" ref="3">
    <original>V</original>
    <variation>A</variation>
    <location>
        <position position="314"/>
    </location>
</feature>
<feature type="sequence conflict" description="In Ref. 2; AAB67706." evidence="22" ref="2">
    <original>S</original>
    <variation>W</variation>
    <location>
        <position position="440"/>
    </location>
</feature>
<feature type="helix" evidence="33">
    <location>
        <begin position="161"/>
        <end position="178"/>
    </location>
</feature>
<feature type="helix" evidence="33">
    <location>
        <begin position="181"/>
        <end position="191"/>
    </location>
</feature>
<feature type="helix" evidence="33">
    <location>
        <begin position="195"/>
        <end position="198"/>
    </location>
</feature>
<feature type="helix" evidence="33">
    <location>
        <begin position="199"/>
        <end position="209"/>
    </location>
</feature>
<feature type="helix" evidence="33">
    <location>
        <begin position="213"/>
        <end position="226"/>
    </location>
</feature>
<feature type="turn" evidence="33">
    <location>
        <begin position="227"/>
        <end position="229"/>
    </location>
</feature>
<feature type="helix" evidence="33">
    <location>
        <begin position="233"/>
        <end position="253"/>
    </location>
</feature>
<feature type="helix" evidence="33">
    <location>
        <begin position="257"/>
        <end position="270"/>
    </location>
</feature>
<feature type="helix" evidence="33">
    <location>
        <begin position="278"/>
        <end position="281"/>
    </location>
</feature>
<feature type="turn" evidence="33">
    <location>
        <begin position="282"/>
        <end position="284"/>
    </location>
</feature>
<feature type="helix" evidence="33">
    <location>
        <begin position="289"/>
        <end position="303"/>
    </location>
</feature>
<feature type="strand" evidence="32">
    <location>
        <begin position="308"/>
        <end position="313"/>
    </location>
</feature>
<feature type="helix" evidence="34">
    <location>
        <begin position="324"/>
        <end position="341"/>
    </location>
</feature>
<feature type="helix" evidence="34">
    <location>
        <begin position="344"/>
        <end position="354"/>
    </location>
</feature>
<feature type="helix" evidence="34">
    <location>
        <begin position="357"/>
        <end position="359"/>
    </location>
</feature>
<feature type="helix" evidence="34">
    <location>
        <begin position="360"/>
        <end position="372"/>
    </location>
</feature>
<feature type="helix" evidence="34">
    <location>
        <begin position="378"/>
        <end position="393"/>
    </location>
</feature>
<feature type="helix" evidence="34">
    <location>
        <begin position="398"/>
        <end position="418"/>
    </location>
</feature>
<feature type="helix" evidence="34">
    <location>
        <begin position="422"/>
        <end position="435"/>
    </location>
</feature>
<feature type="helix" evidence="34">
    <location>
        <begin position="441"/>
        <end position="445"/>
    </location>
</feature>
<sequence>MDVENEQILNVNPADPDNLSDSLFSGDEENAGTEEIKNEINGNWISASSINEARINAKAKRRLRKNSSRDSGRGDSVSDSGSDALRSGLTVPTSPKGRLLDRRSRSGKGRGLPKKGGAGGKGVWGTPGQVYDVEEVDVKDPNYDDDQENCVYETVVLPLDERAFEKTLTPIIQEYFEHGDTNEVAEMLRDLNLGEMKSGVPVLAVSLALEGKASHREMTSKLLSDLCGTVMSTTDVEKSFDKLLKDLPELALDTPRAPQLVGQFIARAVGDGILCNTYIDSYKGTVDCVQARAALDKATVLLSMSKGGKRKDSVWGSGGGQQSVNHLVKEIDMLLKEYLLSGDISEAEHCLKELEVPHFHHELVYEAIIMVLESTGESTFKMILDLLKSLWKSSTITVDQMKRGYERIYNEIPDINLDVPHSYSVLERFVEECFQAGIISKQLRDLCPSRGRKRFVSEGDGGRLKPESY</sequence>
<keyword id="KW-0002">3D-structure</keyword>
<keyword id="KW-0007">Acetylation</keyword>
<keyword id="KW-0025">Alternative splicing</keyword>
<keyword id="KW-0053">Apoptosis</keyword>
<keyword id="KW-0963">Cytoplasm</keyword>
<keyword id="KW-0539">Nucleus</keyword>
<keyword id="KW-0597">Phosphoprotein</keyword>
<keyword id="KW-1267">Proteomics identification</keyword>
<keyword id="KW-1185">Reference proteome</keyword>
<keyword id="KW-0677">Repeat</keyword>
<keyword id="KW-0694">RNA-binding</keyword>
<keyword id="KW-0043">Tumor suppressor</keyword>
<keyword id="KW-0832">Ubl conjugation</keyword>